<dbReference type="EMBL" id="CU329670">
    <property type="protein sequence ID" value="CAC21472.2"/>
    <property type="molecule type" value="Genomic_DNA"/>
</dbReference>
<dbReference type="RefSeq" id="NP_593892.2">
    <property type="nucleotide sequence ID" value="NM_001019322.3"/>
</dbReference>
<dbReference type="SMR" id="Q9HDW5"/>
<dbReference type="FunCoup" id="Q9HDW5">
    <property type="interactions" value="13"/>
</dbReference>
<dbReference type="PaxDb" id="4896-SPAPB2B4.06.1"/>
<dbReference type="KEGG" id="spo:2543466"/>
<dbReference type="PomBase" id="SPAPB2B4.06"/>
<dbReference type="eggNOG" id="KOG4781">
    <property type="taxonomic scope" value="Eukaryota"/>
</dbReference>
<dbReference type="HOGENOM" id="CLU_052827_2_1_1"/>
<dbReference type="InParanoid" id="Q9HDW5"/>
<dbReference type="PhylomeDB" id="Q9HDW5"/>
<dbReference type="PRO" id="PR:Q9HDW5"/>
<dbReference type="Proteomes" id="UP000002485">
    <property type="component" value="Chromosome I"/>
</dbReference>
<dbReference type="GO" id="GO:0031966">
    <property type="term" value="C:mitochondrial membrane"/>
    <property type="evidence" value="ECO:0007669"/>
    <property type="project" value="UniProtKB-SubCell"/>
</dbReference>
<dbReference type="GO" id="GO:0005739">
    <property type="term" value="C:mitochondrion"/>
    <property type="evidence" value="ECO:0007005"/>
    <property type="project" value="PomBase"/>
</dbReference>
<dbReference type="GO" id="GO:0047617">
    <property type="term" value="F:fatty acyl-CoA hydrolase activity"/>
    <property type="evidence" value="ECO:0000266"/>
    <property type="project" value="PomBase"/>
</dbReference>
<dbReference type="GO" id="GO:0006631">
    <property type="term" value="P:fatty acid metabolic process"/>
    <property type="evidence" value="ECO:0000250"/>
    <property type="project" value="PomBase"/>
</dbReference>
<dbReference type="Gene3D" id="3.10.129.10">
    <property type="entry name" value="Hotdog Thioesterase"/>
    <property type="match status" value="1"/>
</dbReference>
<dbReference type="InterPro" id="IPR029069">
    <property type="entry name" value="HotDog_dom_sf"/>
</dbReference>
<dbReference type="InterPro" id="IPR052061">
    <property type="entry name" value="PTE-AB_protein"/>
</dbReference>
<dbReference type="PANTHER" id="PTHR47260">
    <property type="entry name" value="UPF0644 PROTEIN PB2B4.06"/>
    <property type="match status" value="1"/>
</dbReference>
<dbReference type="PANTHER" id="PTHR47260:SF1">
    <property type="entry name" value="UPF0644 PROTEIN PB2B4.06"/>
    <property type="match status" value="1"/>
</dbReference>
<dbReference type="SUPFAM" id="SSF54637">
    <property type="entry name" value="Thioesterase/thiol ester dehydrase-isomerase"/>
    <property type="match status" value="1"/>
</dbReference>
<protein>
    <recommendedName>
        <fullName>UPF0644 protein PB2B4.06</fullName>
    </recommendedName>
</protein>
<organism>
    <name type="scientific">Schizosaccharomyces pombe (strain 972 / ATCC 24843)</name>
    <name type="common">Fission yeast</name>
    <dbReference type="NCBI Taxonomy" id="284812"/>
    <lineage>
        <taxon>Eukaryota</taxon>
        <taxon>Fungi</taxon>
        <taxon>Dikarya</taxon>
        <taxon>Ascomycota</taxon>
        <taxon>Taphrinomycotina</taxon>
        <taxon>Schizosaccharomycetes</taxon>
        <taxon>Schizosaccharomycetales</taxon>
        <taxon>Schizosaccharomycetaceae</taxon>
        <taxon>Schizosaccharomyces</taxon>
    </lineage>
</organism>
<evidence type="ECO:0000255" key="1"/>
<evidence type="ECO:0000305" key="2"/>
<comment type="subcellular location">
    <subcellularLocation>
        <location evidence="2">Mitochondrion membrane</location>
        <topology evidence="2">Single-pass membrane protein</topology>
    </subcellularLocation>
</comment>
<comment type="similarity">
    <text evidence="2">Belongs to the UPF0644 family.</text>
</comment>
<reference key="1">
    <citation type="journal article" date="2002" name="Nature">
        <title>The genome sequence of Schizosaccharomyces pombe.</title>
        <authorList>
            <person name="Wood V."/>
            <person name="Gwilliam R."/>
            <person name="Rajandream M.A."/>
            <person name="Lyne M.H."/>
            <person name="Lyne R."/>
            <person name="Stewart A."/>
            <person name="Sgouros J.G."/>
            <person name="Peat N."/>
            <person name="Hayles J."/>
            <person name="Baker S.G."/>
            <person name="Basham D."/>
            <person name="Bowman S."/>
            <person name="Brooks K."/>
            <person name="Brown D."/>
            <person name="Brown S."/>
            <person name="Chillingworth T."/>
            <person name="Churcher C.M."/>
            <person name="Collins M."/>
            <person name="Connor R."/>
            <person name="Cronin A."/>
            <person name="Davis P."/>
            <person name="Feltwell T."/>
            <person name="Fraser A."/>
            <person name="Gentles S."/>
            <person name="Goble A."/>
            <person name="Hamlin N."/>
            <person name="Harris D.E."/>
            <person name="Hidalgo J."/>
            <person name="Hodgson G."/>
            <person name="Holroyd S."/>
            <person name="Hornsby T."/>
            <person name="Howarth S."/>
            <person name="Huckle E.J."/>
            <person name="Hunt S."/>
            <person name="Jagels K."/>
            <person name="James K.D."/>
            <person name="Jones L."/>
            <person name="Jones M."/>
            <person name="Leather S."/>
            <person name="McDonald S."/>
            <person name="McLean J."/>
            <person name="Mooney P."/>
            <person name="Moule S."/>
            <person name="Mungall K.L."/>
            <person name="Murphy L.D."/>
            <person name="Niblett D."/>
            <person name="Odell C."/>
            <person name="Oliver K."/>
            <person name="O'Neil S."/>
            <person name="Pearson D."/>
            <person name="Quail M.A."/>
            <person name="Rabbinowitsch E."/>
            <person name="Rutherford K.M."/>
            <person name="Rutter S."/>
            <person name="Saunders D."/>
            <person name="Seeger K."/>
            <person name="Sharp S."/>
            <person name="Skelton J."/>
            <person name="Simmonds M.N."/>
            <person name="Squares R."/>
            <person name="Squares S."/>
            <person name="Stevens K."/>
            <person name="Taylor K."/>
            <person name="Taylor R.G."/>
            <person name="Tivey A."/>
            <person name="Walsh S.V."/>
            <person name="Warren T."/>
            <person name="Whitehead S."/>
            <person name="Woodward J.R."/>
            <person name="Volckaert G."/>
            <person name="Aert R."/>
            <person name="Robben J."/>
            <person name="Grymonprez B."/>
            <person name="Weltjens I."/>
            <person name="Vanstreels E."/>
            <person name="Rieger M."/>
            <person name="Schaefer M."/>
            <person name="Mueller-Auer S."/>
            <person name="Gabel C."/>
            <person name="Fuchs M."/>
            <person name="Duesterhoeft A."/>
            <person name="Fritzc C."/>
            <person name="Holzer E."/>
            <person name="Moestl D."/>
            <person name="Hilbert H."/>
            <person name="Borzym K."/>
            <person name="Langer I."/>
            <person name="Beck A."/>
            <person name="Lehrach H."/>
            <person name="Reinhardt R."/>
            <person name="Pohl T.M."/>
            <person name="Eger P."/>
            <person name="Zimmermann W."/>
            <person name="Wedler H."/>
            <person name="Wambutt R."/>
            <person name="Purnelle B."/>
            <person name="Goffeau A."/>
            <person name="Cadieu E."/>
            <person name="Dreano S."/>
            <person name="Gloux S."/>
            <person name="Lelaure V."/>
            <person name="Mottier S."/>
            <person name="Galibert F."/>
            <person name="Aves S.J."/>
            <person name="Xiang Z."/>
            <person name="Hunt C."/>
            <person name="Moore K."/>
            <person name="Hurst S.M."/>
            <person name="Lucas M."/>
            <person name="Rochet M."/>
            <person name="Gaillardin C."/>
            <person name="Tallada V.A."/>
            <person name="Garzon A."/>
            <person name="Thode G."/>
            <person name="Daga R.R."/>
            <person name="Cruzado L."/>
            <person name="Jimenez J."/>
            <person name="Sanchez M."/>
            <person name="del Rey F."/>
            <person name="Benito J."/>
            <person name="Dominguez A."/>
            <person name="Revuelta J.L."/>
            <person name="Moreno S."/>
            <person name="Armstrong J."/>
            <person name="Forsburg S.L."/>
            <person name="Cerutti L."/>
            <person name="Lowe T."/>
            <person name="McCombie W.R."/>
            <person name="Paulsen I."/>
            <person name="Potashkin J."/>
            <person name="Shpakovski G.V."/>
            <person name="Ussery D."/>
            <person name="Barrell B.G."/>
            <person name="Nurse P."/>
        </authorList>
    </citation>
    <scope>NUCLEOTIDE SEQUENCE [LARGE SCALE GENOMIC DNA]</scope>
    <source>
        <strain>972 / ATCC 24843</strain>
    </source>
</reference>
<reference key="2">
    <citation type="journal article" date="2006" name="Nat. Biotechnol.">
        <title>ORFeome cloning and global analysis of protein localization in the fission yeast Schizosaccharomyces pombe.</title>
        <authorList>
            <person name="Matsuyama A."/>
            <person name="Arai R."/>
            <person name="Yashiroda Y."/>
            <person name="Shirai A."/>
            <person name="Kamata A."/>
            <person name="Sekido S."/>
            <person name="Kobayashi Y."/>
            <person name="Hashimoto A."/>
            <person name="Hamamoto M."/>
            <person name="Hiraoka Y."/>
            <person name="Horinouchi S."/>
            <person name="Yoshida M."/>
        </authorList>
    </citation>
    <scope>SUBCELLULAR LOCATION [LARGE SCALE ANALYSIS]</scope>
</reference>
<gene>
    <name type="ORF">SPAPB2B4.06</name>
</gene>
<feature type="chain" id="PRO_0000350754" description="UPF0644 protein PB2B4.06">
    <location>
        <begin position="1"/>
        <end position="256"/>
    </location>
</feature>
<feature type="transmembrane region" description="Helical" evidence="1">
    <location>
        <begin position="34"/>
        <end position="56"/>
    </location>
</feature>
<keyword id="KW-0472">Membrane</keyword>
<keyword id="KW-0496">Mitochondrion</keyword>
<keyword id="KW-1185">Reference proteome</keyword>
<keyword id="KW-0812">Transmembrane</keyword>
<keyword id="KW-1133">Transmembrane helix</keyword>
<name>YFW6_SCHPO</name>
<proteinExistence type="inferred from homology"/>
<accession>Q9HDW5</accession>
<sequence>MGIASSLRLFGKAPASYLFNGFRRQMKNPLMKKGVVYAGVSGTCAAAGYMFGNFVMEKHIYQVKYTEEQEKEVLEVENRLQNLKIVKDLRQNPSFRELRMPFNRSNHSLTNNLLSGPGRITVPPVIFYDKSTRQVYAIAHVGKDVGLDDDTIHPGLIATCMDEVLAICSFLSLPNKIAVTANLKLSNPTKAYTNHFYILRSHLEWTKGRKAQTHGTAYMLDNEDPSKSTCVAIADGLFVEPRFAKYLKHVIPVSLP</sequence>